<dbReference type="EC" id="3.5.1.n3" evidence="1"/>
<dbReference type="EMBL" id="CP000821">
    <property type="protein sequence ID" value="ABV35534.1"/>
    <property type="molecule type" value="Genomic_DNA"/>
</dbReference>
<dbReference type="RefSeq" id="WP_012141270.1">
    <property type="nucleotide sequence ID" value="NC_009831.1"/>
</dbReference>
<dbReference type="SMR" id="A8FRR1"/>
<dbReference type="STRING" id="425104.Ssed_0923"/>
<dbReference type="KEGG" id="sse:Ssed_0923"/>
<dbReference type="eggNOG" id="COG0726">
    <property type="taxonomic scope" value="Bacteria"/>
</dbReference>
<dbReference type="HOGENOM" id="CLU_084199_0_0_6"/>
<dbReference type="OrthoDB" id="5589314at2"/>
<dbReference type="UniPathway" id="UPA00030"/>
<dbReference type="UniPathway" id="UPA00036">
    <property type="reaction ID" value="UER00496"/>
</dbReference>
<dbReference type="Proteomes" id="UP000002015">
    <property type="component" value="Chromosome"/>
</dbReference>
<dbReference type="GO" id="GO:0016020">
    <property type="term" value="C:membrane"/>
    <property type="evidence" value="ECO:0007669"/>
    <property type="project" value="GOC"/>
</dbReference>
<dbReference type="GO" id="GO:0016811">
    <property type="term" value="F:hydrolase activity, acting on carbon-nitrogen (but not peptide) bonds, in linear amides"/>
    <property type="evidence" value="ECO:0007669"/>
    <property type="project" value="UniProtKB-UniRule"/>
</dbReference>
<dbReference type="GO" id="GO:0036108">
    <property type="term" value="P:4-amino-4-deoxy-alpha-L-arabinopyranosyl undecaprenyl phosphate biosynthetic process"/>
    <property type="evidence" value="ECO:0007669"/>
    <property type="project" value="UniProtKB-UniRule"/>
</dbReference>
<dbReference type="GO" id="GO:0009245">
    <property type="term" value="P:lipid A biosynthetic process"/>
    <property type="evidence" value="ECO:0007669"/>
    <property type="project" value="UniProtKB-UniRule"/>
</dbReference>
<dbReference type="GO" id="GO:0009103">
    <property type="term" value="P:lipopolysaccharide biosynthetic process"/>
    <property type="evidence" value="ECO:0007669"/>
    <property type="project" value="UniProtKB-UniRule"/>
</dbReference>
<dbReference type="GO" id="GO:0046677">
    <property type="term" value="P:response to antibiotic"/>
    <property type="evidence" value="ECO:0007669"/>
    <property type="project" value="UniProtKB-KW"/>
</dbReference>
<dbReference type="CDD" id="cd10939">
    <property type="entry name" value="CE4_ArnD"/>
    <property type="match status" value="1"/>
</dbReference>
<dbReference type="Gene3D" id="3.20.20.370">
    <property type="entry name" value="Glycoside hydrolase/deacetylase"/>
    <property type="match status" value="1"/>
</dbReference>
<dbReference type="HAMAP" id="MF_01870">
    <property type="entry name" value="ArnD"/>
    <property type="match status" value="1"/>
</dbReference>
<dbReference type="InterPro" id="IPR023557">
    <property type="entry name" value="ArnD"/>
</dbReference>
<dbReference type="InterPro" id="IPR011330">
    <property type="entry name" value="Glyco_hydro/deAcase_b/a-brl"/>
</dbReference>
<dbReference type="InterPro" id="IPR002509">
    <property type="entry name" value="NODB_dom"/>
</dbReference>
<dbReference type="InterPro" id="IPR050248">
    <property type="entry name" value="Polysacc_deacetylase_ArnD"/>
</dbReference>
<dbReference type="NCBIfam" id="NF011923">
    <property type="entry name" value="PRK15394.1"/>
    <property type="match status" value="1"/>
</dbReference>
<dbReference type="PANTHER" id="PTHR10587:SF137">
    <property type="entry name" value="4-DEOXY-4-FORMAMIDO-L-ARABINOSE-PHOSPHOUNDECAPRENOL DEFORMYLASE ARND-RELATED"/>
    <property type="match status" value="1"/>
</dbReference>
<dbReference type="PANTHER" id="PTHR10587">
    <property type="entry name" value="GLYCOSYL TRANSFERASE-RELATED"/>
    <property type="match status" value="1"/>
</dbReference>
<dbReference type="Pfam" id="PF01522">
    <property type="entry name" value="Polysacc_deac_1"/>
    <property type="match status" value="1"/>
</dbReference>
<dbReference type="SUPFAM" id="SSF88713">
    <property type="entry name" value="Glycoside hydrolase/deacetylase"/>
    <property type="match status" value="1"/>
</dbReference>
<dbReference type="PROSITE" id="PS51677">
    <property type="entry name" value="NODB"/>
    <property type="match status" value="1"/>
</dbReference>
<keyword id="KW-0046">Antibiotic resistance</keyword>
<keyword id="KW-0378">Hydrolase</keyword>
<keyword id="KW-0441">Lipid A biosynthesis</keyword>
<keyword id="KW-0444">Lipid biosynthesis</keyword>
<keyword id="KW-0443">Lipid metabolism</keyword>
<keyword id="KW-0448">Lipopolysaccharide biosynthesis</keyword>
<keyword id="KW-1185">Reference proteome</keyword>
<feature type="chain" id="PRO_0000383541" description="Probable 4-deoxy-4-formamido-L-arabinose-phosphoundecaprenol deformylase ArnD">
    <location>
        <begin position="1"/>
        <end position="305"/>
    </location>
</feature>
<feature type="domain" description="NodB homology" evidence="1">
    <location>
        <begin position="7"/>
        <end position="262"/>
    </location>
</feature>
<accession>A8FRR1</accession>
<sequence length="305" mass="34631">MSQQNVTKVGLRIDVDTYRGTRLGVPKLLEIFQRHDISASFFFTVGPDNMGRHIWRLLRPAFLKKMLRSKAASLYGWDILIRGTLWPGPIIGKKLAHIIKQADDAGHEIGLHAWDHHKWQMKTDVMTPAELHSEIDKGYQLLSTLTGKPIPCSAVAGWRCTDATLEQKQRFGFRYNSDCRGESIFIPQLGMAPQIPVTLPTYDELVGKDNIDHSNYNAEIIKLVNPDGLNVYTIHAEVEGIVCAQLFEELIIQAKENNIEFVPMIELLDHEDIDWPLDEILNIEIDGREGWLSHQASMINKQKSA</sequence>
<reference key="1">
    <citation type="submission" date="2007-08" db="EMBL/GenBank/DDBJ databases">
        <title>Complete sequence of Shewanella sediminis HAW-EB3.</title>
        <authorList>
            <consortium name="US DOE Joint Genome Institute"/>
            <person name="Copeland A."/>
            <person name="Lucas S."/>
            <person name="Lapidus A."/>
            <person name="Barry K."/>
            <person name="Glavina del Rio T."/>
            <person name="Dalin E."/>
            <person name="Tice H."/>
            <person name="Pitluck S."/>
            <person name="Chertkov O."/>
            <person name="Brettin T."/>
            <person name="Bruce D."/>
            <person name="Detter J.C."/>
            <person name="Han C."/>
            <person name="Schmutz J."/>
            <person name="Larimer F."/>
            <person name="Land M."/>
            <person name="Hauser L."/>
            <person name="Kyrpides N."/>
            <person name="Kim E."/>
            <person name="Zhao J.-S."/>
            <person name="Richardson P."/>
        </authorList>
    </citation>
    <scope>NUCLEOTIDE SEQUENCE [LARGE SCALE GENOMIC DNA]</scope>
    <source>
        <strain>HAW-EB3</strain>
    </source>
</reference>
<proteinExistence type="inferred from homology"/>
<gene>
    <name evidence="1" type="primary">arnD</name>
    <name type="ordered locus">Ssed_0923</name>
</gene>
<organism>
    <name type="scientific">Shewanella sediminis (strain HAW-EB3)</name>
    <dbReference type="NCBI Taxonomy" id="425104"/>
    <lineage>
        <taxon>Bacteria</taxon>
        <taxon>Pseudomonadati</taxon>
        <taxon>Pseudomonadota</taxon>
        <taxon>Gammaproteobacteria</taxon>
        <taxon>Alteromonadales</taxon>
        <taxon>Shewanellaceae</taxon>
        <taxon>Shewanella</taxon>
    </lineage>
</organism>
<name>ARND_SHESH</name>
<comment type="function">
    <text evidence="1">Catalyzes the deformylation of 4-deoxy-4-formamido-L-arabinose-phosphoundecaprenol to 4-amino-4-deoxy-L-arabinose-phosphoundecaprenol. The modified arabinose is attached to lipid A and is required for resistance to polymyxin and cationic antimicrobial peptides.</text>
</comment>
<comment type="catalytic activity">
    <reaction evidence="1">
        <text>4-deoxy-4-formamido-alpha-L-arabinopyranosyl di-trans,octa-cis-undecaprenyl phosphate + H2O = 4-amino-4-deoxy-alpha-L-arabinopyranosyl di-trans,octa-cis-undecaprenyl phosphate + formate</text>
        <dbReference type="Rhea" id="RHEA:27734"/>
        <dbReference type="ChEBI" id="CHEBI:15377"/>
        <dbReference type="ChEBI" id="CHEBI:15740"/>
        <dbReference type="ChEBI" id="CHEBI:58909"/>
        <dbReference type="ChEBI" id="CHEBI:60463"/>
        <dbReference type="EC" id="3.5.1.n3"/>
    </reaction>
</comment>
<comment type="pathway">
    <text evidence="1">Glycolipid biosynthesis; 4-amino-4-deoxy-alpha-L-arabinose undecaprenyl phosphate biosynthesis; 4-amino-4-deoxy-alpha-L-arabinose undecaprenyl phosphate from UDP-4-deoxy-4-formamido-beta-L-arabinose and undecaprenyl phosphate: step 2/2.</text>
</comment>
<comment type="pathway">
    <text evidence="1">Bacterial outer membrane biogenesis; lipopolysaccharide biosynthesis.</text>
</comment>
<comment type="similarity">
    <text evidence="1">Belongs to the polysaccharide deacetylase family. ArnD deformylase subfamily.</text>
</comment>
<evidence type="ECO:0000255" key="1">
    <source>
        <dbReference type="HAMAP-Rule" id="MF_01870"/>
    </source>
</evidence>
<protein>
    <recommendedName>
        <fullName evidence="1">Probable 4-deoxy-4-formamido-L-arabinose-phosphoundecaprenol deformylase ArnD</fullName>
        <ecNumber evidence="1">3.5.1.n3</ecNumber>
    </recommendedName>
</protein>